<comment type="function">
    <text evidence="2">May regulate immune response to the intracellular capsid in acting as a T-cell tolerogen, by having an immunoregulatory effect which prevents destruction of infected cells by cytotoxic T-cells. This immune regulation may predispose to chronicity during perinatal infections and prevent severe liver injury during adult infections.</text>
</comment>
<comment type="subunit">
    <text evidence="2">Homodimerizes.</text>
</comment>
<comment type="subcellular location">
    <subcellularLocation>
        <location evidence="2">Secreted</location>
    </subcellularLocation>
    <subcellularLocation>
        <location evidence="2">Host nucleus</location>
    </subcellularLocation>
</comment>
<comment type="alternative products">
    <event type="alternative initiation"/>
    <isoform>
        <id>P0C6G7-1</id>
        <name>External core antigen</name>
        <sequence type="displayed"/>
    </isoform>
    <isoform>
        <id>P69707-1</id>
        <name>Capsid protein</name>
        <sequence type="external"/>
    </isoform>
</comment>
<comment type="PTM">
    <text evidence="2">Phosphorylated.</text>
</comment>
<comment type="PTM">
    <text evidence="2">Cleaved by host furin.</text>
</comment>
<comment type="similarity">
    <text evidence="2">Belongs to the orthohepadnavirus precore antigen family.</text>
</comment>
<evidence type="ECO:0000250" key="1"/>
<evidence type="ECO:0000255" key="2">
    <source>
        <dbReference type="HAMAP-Rule" id="MF_04076"/>
    </source>
</evidence>
<evidence type="ECO:0000256" key="3">
    <source>
        <dbReference type="SAM" id="MobiDB-lite"/>
    </source>
</evidence>
<organism>
    <name type="scientific">Hepatitis B virus genotype B2 (isolate Indonesia/pIDW420/1988)</name>
    <name type="common">HBV-B</name>
    <dbReference type="NCBI Taxonomy" id="10412"/>
    <lineage>
        <taxon>Viruses</taxon>
        <taxon>Riboviria</taxon>
        <taxon>Pararnavirae</taxon>
        <taxon>Artverviricota</taxon>
        <taxon>Revtraviricetes</taxon>
        <taxon>Blubervirales</taxon>
        <taxon>Hepadnaviridae</taxon>
        <taxon>Orthohepadnavirus</taxon>
        <taxon>Hepatitis B virus</taxon>
    </lineage>
</organism>
<gene>
    <name evidence="2" type="primary">C</name>
</gene>
<dbReference type="EMBL" id="D00331">
    <property type="status" value="NOT_ANNOTATED_CDS"/>
    <property type="molecule type" value="Genomic_DNA"/>
</dbReference>
<dbReference type="SMR" id="P0C6G7"/>
<dbReference type="Proteomes" id="UP000007914">
    <property type="component" value="Genome"/>
</dbReference>
<dbReference type="GO" id="GO:0005576">
    <property type="term" value="C:extracellular region"/>
    <property type="evidence" value="ECO:0007669"/>
    <property type="project" value="UniProtKB-SubCell"/>
</dbReference>
<dbReference type="GO" id="GO:0043657">
    <property type="term" value="C:host cell"/>
    <property type="evidence" value="ECO:0007669"/>
    <property type="project" value="GOC"/>
</dbReference>
<dbReference type="GO" id="GO:0030430">
    <property type="term" value="C:host cell cytoplasm"/>
    <property type="evidence" value="ECO:0007669"/>
    <property type="project" value="UniProtKB-UniRule"/>
</dbReference>
<dbReference type="GO" id="GO:0042025">
    <property type="term" value="C:host cell nucleus"/>
    <property type="evidence" value="ECO:0007669"/>
    <property type="project" value="UniProtKB-SubCell"/>
</dbReference>
<dbReference type="GO" id="GO:0039619">
    <property type="term" value="C:T=4 icosahedral viral capsid"/>
    <property type="evidence" value="ECO:0007669"/>
    <property type="project" value="UniProtKB-UniRule"/>
</dbReference>
<dbReference type="GO" id="GO:0003677">
    <property type="term" value="F:DNA binding"/>
    <property type="evidence" value="ECO:0007669"/>
    <property type="project" value="UniProtKB-UniRule"/>
</dbReference>
<dbReference type="GO" id="GO:0003723">
    <property type="term" value="F:RNA binding"/>
    <property type="evidence" value="ECO:0007669"/>
    <property type="project" value="UniProtKB-UniRule"/>
</dbReference>
<dbReference type="GO" id="GO:0005198">
    <property type="term" value="F:structural molecule activity"/>
    <property type="evidence" value="ECO:0007669"/>
    <property type="project" value="UniProtKB-UniRule"/>
</dbReference>
<dbReference type="GO" id="GO:0075521">
    <property type="term" value="P:microtubule-dependent intracellular transport of viral material towards nucleus"/>
    <property type="evidence" value="ECO:0007669"/>
    <property type="project" value="UniProtKB-UniRule"/>
</dbReference>
<dbReference type="GO" id="GO:0046718">
    <property type="term" value="P:symbiont entry into host cell"/>
    <property type="evidence" value="ECO:0007669"/>
    <property type="project" value="UniProtKB-UniRule"/>
</dbReference>
<dbReference type="GO" id="GO:0075732">
    <property type="term" value="P:viral penetration into host nucleus"/>
    <property type="evidence" value="ECO:0007669"/>
    <property type="project" value="UniProtKB-UniRule"/>
</dbReference>
<dbReference type="FunFam" id="1.10.4090.10:FF:000001">
    <property type="entry name" value="Capsid protein"/>
    <property type="match status" value="1"/>
</dbReference>
<dbReference type="Gene3D" id="1.10.4090.10">
    <property type="entry name" value="Viral capsid, core domain supefamily, Hepatitis B virus"/>
    <property type="match status" value="1"/>
</dbReference>
<dbReference type="HAMAP" id="MF_04076">
    <property type="entry name" value="HBV_HBEAG"/>
    <property type="match status" value="1"/>
</dbReference>
<dbReference type="InterPro" id="IPR013195">
    <property type="entry name" value="Hepatitis_B_virus_capsid_N"/>
</dbReference>
<dbReference type="InterPro" id="IPR002006">
    <property type="entry name" value="Hepatitis_core"/>
</dbReference>
<dbReference type="InterPro" id="IPR036459">
    <property type="entry name" value="Viral_capsid_core_dom_sf_HBV"/>
</dbReference>
<dbReference type="Pfam" id="PF08290">
    <property type="entry name" value="Hep_core_N"/>
    <property type="match status" value="1"/>
</dbReference>
<dbReference type="Pfam" id="PF00906">
    <property type="entry name" value="Hepatitis_core"/>
    <property type="match status" value="3"/>
</dbReference>
<dbReference type="SUPFAM" id="SSF47852">
    <property type="entry name" value="Hepatitis B viral capsid (hbcag)"/>
    <property type="match status" value="1"/>
</dbReference>
<accession>P0C6G7</accession>
<protein>
    <recommendedName>
        <fullName evidence="2">External core antigen</fullName>
    </recommendedName>
    <alternativeName>
        <fullName evidence="2">HBeAg</fullName>
    </alternativeName>
    <alternativeName>
        <fullName evidence="2">Precore protein</fullName>
    </alternativeName>
    <alternativeName>
        <fullName evidence="2">p25</fullName>
    </alternativeName>
</protein>
<proteinExistence type="inferred from homology"/>
<organismHost>
    <name type="scientific">Homo sapiens</name>
    <name type="common">Human</name>
    <dbReference type="NCBI Taxonomy" id="9606"/>
</organismHost>
<organismHost>
    <name type="scientific">Pan troglodytes</name>
    <name type="common">Chimpanzee</name>
    <dbReference type="NCBI Taxonomy" id="9598"/>
</organismHost>
<keyword id="KW-0024">Alternative initiation</keyword>
<keyword id="KW-1015">Disulfide bond</keyword>
<keyword id="KW-1048">Host nucleus</keyword>
<keyword id="KW-0945">Host-virus interaction</keyword>
<keyword id="KW-0677">Repeat</keyword>
<keyword id="KW-0964">Secreted</keyword>
<keyword id="KW-0732">Signal</keyword>
<keyword id="KW-0899">Viral immunoevasion</keyword>
<feature type="signal peptide" evidence="2">
    <location>
        <begin position="1"/>
        <end position="19"/>
    </location>
</feature>
<feature type="chain" id="PRO_0000324704" description="External core antigen" evidence="2">
    <location>
        <begin position="20"/>
        <end position="212"/>
    </location>
</feature>
<feature type="propeptide" id="PRO_0000324705" evidence="1">
    <location>
        <begin position="184"/>
        <end position="212"/>
    </location>
</feature>
<feature type="repeat" description="1; half-length">
    <location>
        <begin position="184"/>
        <end position="190"/>
    </location>
</feature>
<feature type="repeat" description="2">
    <location>
        <begin position="191"/>
        <end position="198"/>
    </location>
</feature>
<feature type="repeat" description="3">
    <location>
        <begin position="199"/>
        <end position="206"/>
    </location>
</feature>
<feature type="region of interest" description="HBEAG" evidence="2">
    <location>
        <begin position="25"/>
        <end position="27"/>
    </location>
</feature>
<feature type="region of interest" description="Disordered" evidence="3">
    <location>
        <begin position="165"/>
        <end position="212"/>
    </location>
</feature>
<feature type="region of interest" description="3 X 8 AA repeats of S-P-R-R-R-R-S-Q">
    <location>
        <begin position="184"/>
        <end position="206"/>
    </location>
</feature>
<feature type="compositionally biased region" description="Basic residues" evidence="3">
    <location>
        <begin position="178"/>
        <end position="205"/>
    </location>
</feature>
<feature type="site" description="Cleavage; by host" evidence="2">
    <location>
        <begin position="183"/>
        <end position="184"/>
    </location>
</feature>
<feature type="disulfide bond" description="Interchain" evidence="2">
    <location>
        <position position="77"/>
    </location>
</feature>
<feature type="disulfide bond" description="Interchain" evidence="2">
    <location>
        <position position="90"/>
    </location>
</feature>
<reference key="1">
    <citation type="journal article" date="1988" name="J. Gen. Virol.">
        <title>Typing hepatitis B virus by homology in nucleotide sequence: comparison of surface antigen subtypes.</title>
        <authorList>
            <person name="Okamoto H."/>
            <person name="Tsuda F."/>
            <person name="Sakugawa H."/>
            <person name="Sastrosoewignjo R.I."/>
            <person name="Imai M."/>
            <person name="Miyakawa Y."/>
            <person name="Mayumi M."/>
        </authorList>
    </citation>
    <scope>NUCLEOTIDE SEQUENCE [GENOMIC DNA]</scope>
</reference>
<sequence length="212" mass="24329">MQLFHLCLIISCSCPTVQASKLCLGWLWGMDIDPYKEFGASVELLSFLPSDFFPSIRDLLDTASALYREALESPEHCSPHHTALRQAILCWGELMNLATWVGSNLEDPASRELVVSYVNVNMGLKIRQLLWFHISCLTFGRETVLEYLVSFGVWIRTPPAYRPPNAPILSTLPETTVVRRRGRSPRRRTPSPRRRRSQSPRRRRSQSRESQC</sequence>
<name>HBEAG_HBVB2</name>